<evidence type="ECO:0000255" key="1">
    <source>
        <dbReference type="HAMAP-Rule" id="MF_01309"/>
    </source>
</evidence>
<evidence type="ECO:0000305" key="2"/>
<feature type="chain" id="PRO_0000130116" description="Small ribosomal subunit protein uS3">
    <location>
        <begin position="1"/>
        <end position="250"/>
    </location>
</feature>
<feature type="domain" description="KH type-2" evidence="1">
    <location>
        <begin position="39"/>
        <end position="111"/>
    </location>
</feature>
<proteinExistence type="inferred from homology"/>
<keyword id="KW-0687">Ribonucleoprotein</keyword>
<keyword id="KW-0689">Ribosomal protein</keyword>
<keyword id="KW-0694">RNA-binding</keyword>
<keyword id="KW-0699">rRNA-binding</keyword>
<organism>
    <name type="scientific">Elm witches'-broom phytoplasma</name>
    <dbReference type="NCBI Taxonomy" id="182216"/>
    <lineage>
        <taxon>Bacteria</taxon>
        <taxon>Bacillati</taxon>
        <taxon>Mycoplasmatota</taxon>
        <taxon>Mollicutes</taxon>
        <taxon>Acholeplasmatales</taxon>
        <taxon>Acholeplasmataceae</taxon>
        <taxon>Candidatus Phytoplasma</taxon>
    </lineage>
</organism>
<name>RS3_ELMPH</name>
<dbReference type="EMBL" id="AF396949">
    <property type="protein sequence ID" value="AAL57337.1"/>
    <property type="molecule type" value="Genomic_DNA"/>
</dbReference>
<dbReference type="SMR" id="P0A4C1"/>
<dbReference type="GO" id="GO:0022627">
    <property type="term" value="C:cytosolic small ribosomal subunit"/>
    <property type="evidence" value="ECO:0007669"/>
    <property type="project" value="TreeGrafter"/>
</dbReference>
<dbReference type="GO" id="GO:0003729">
    <property type="term" value="F:mRNA binding"/>
    <property type="evidence" value="ECO:0007669"/>
    <property type="project" value="UniProtKB-UniRule"/>
</dbReference>
<dbReference type="GO" id="GO:0019843">
    <property type="term" value="F:rRNA binding"/>
    <property type="evidence" value="ECO:0007669"/>
    <property type="project" value="UniProtKB-UniRule"/>
</dbReference>
<dbReference type="GO" id="GO:0003735">
    <property type="term" value="F:structural constituent of ribosome"/>
    <property type="evidence" value="ECO:0007669"/>
    <property type="project" value="InterPro"/>
</dbReference>
<dbReference type="GO" id="GO:0006412">
    <property type="term" value="P:translation"/>
    <property type="evidence" value="ECO:0007669"/>
    <property type="project" value="UniProtKB-UniRule"/>
</dbReference>
<dbReference type="CDD" id="cd02412">
    <property type="entry name" value="KH-II_30S_S3"/>
    <property type="match status" value="1"/>
</dbReference>
<dbReference type="Gene3D" id="3.30.300.20">
    <property type="match status" value="1"/>
</dbReference>
<dbReference type="Gene3D" id="3.30.1140.32">
    <property type="entry name" value="Ribosomal protein S3, C-terminal domain"/>
    <property type="match status" value="1"/>
</dbReference>
<dbReference type="HAMAP" id="MF_01309_B">
    <property type="entry name" value="Ribosomal_uS3_B"/>
    <property type="match status" value="1"/>
</dbReference>
<dbReference type="InterPro" id="IPR015946">
    <property type="entry name" value="KH_dom-like_a/b"/>
</dbReference>
<dbReference type="InterPro" id="IPR004044">
    <property type="entry name" value="KH_dom_type_2"/>
</dbReference>
<dbReference type="InterPro" id="IPR009019">
    <property type="entry name" value="KH_sf_prok-type"/>
</dbReference>
<dbReference type="InterPro" id="IPR036419">
    <property type="entry name" value="Ribosomal_S3_C_sf"/>
</dbReference>
<dbReference type="InterPro" id="IPR005704">
    <property type="entry name" value="Ribosomal_uS3_bac-typ"/>
</dbReference>
<dbReference type="InterPro" id="IPR001351">
    <property type="entry name" value="Ribosomal_uS3_C"/>
</dbReference>
<dbReference type="InterPro" id="IPR018280">
    <property type="entry name" value="Ribosomal_uS3_CS"/>
</dbReference>
<dbReference type="NCBIfam" id="TIGR01009">
    <property type="entry name" value="rpsC_bact"/>
    <property type="match status" value="1"/>
</dbReference>
<dbReference type="PANTHER" id="PTHR11760">
    <property type="entry name" value="30S/40S RIBOSOMAL PROTEIN S3"/>
    <property type="match status" value="1"/>
</dbReference>
<dbReference type="PANTHER" id="PTHR11760:SF19">
    <property type="entry name" value="SMALL RIBOSOMAL SUBUNIT PROTEIN US3C"/>
    <property type="match status" value="1"/>
</dbReference>
<dbReference type="Pfam" id="PF00189">
    <property type="entry name" value="Ribosomal_S3_C"/>
    <property type="match status" value="1"/>
</dbReference>
<dbReference type="SUPFAM" id="SSF54814">
    <property type="entry name" value="Prokaryotic type KH domain (KH-domain type II)"/>
    <property type="match status" value="1"/>
</dbReference>
<dbReference type="SUPFAM" id="SSF54821">
    <property type="entry name" value="Ribosomal protein S3 C-terminal domain"/>
    <property type="match status" value="1"/>
</dbReference>
<dbReference type="PROSITE" id="PS50823">
    <property type="entry name" value="KH_TYPE_2"/>
    <property type="match status" value="1"/>
</dbReference>
<dbReference type="PROSITE" id="PS00548">
    <property type="entry name" value="RIBOSOMAL_S3"/>
    <property type="match status" value="1"/>
</dbReference>
<protein>
    <recommendedName>
        <fullName evidence="1">Small ribosomal subunit protein uS3</fullName>
    </recommendedName>
    <alternativeName>
        <fullName evidence="2">30S ribosomal protein S3</fullName>
    </alternativeName>
</protein>
<gene>
    <name evidence="1" type="primary">rpsC</name>
    <name evidence="1" type="synonym">rps3</name>
</gene>
<comment type="function">
    <text evidence="1">Binds the lower part of the 30S subunit head. Binds mRNA in the 70S ribosome, positioning it for translation.</text>
</comment>
<comment type="subunit">
    <text evidence="1">Part of the 30S ribosomal subunit. Forms a tight complex with proteins S10 and S14.</text>
</comment>
<comment type="similarity">
    <text evidence="1">Belongs to the universal ribosomal protein uS3 family.</text>
</comment>
<sequence>MGQKSNPNGLRLGIIRTWESKWYDVDKKVPFLVGEDFKIRTLIKNHYPKSTISQIEIKRLKKSNDEFIEIDLYTSKIGIIQGPENKNKNSLINKIEKLINKKIQINIFEVKAFNKIAILVAQNIAMQLQQRAFYKAVLKSAIQKALKSGIKGIKIIITGRLGGAEKARRNSISMGIVPLNTLRADIDYAFEEAHTTYGVLGVKVIINHGEVLPNKTIADTRQIFSSQYENKKNNNKRHFVNKKNFKTSTS</sequence>
<reference key="1">
    <citation type="journal article" date="2002" name="Mol. Cell. Probes">
        <title>Genetic variability among flavescence doree phytoplasmas from different origins in Italy and France.</title>
        <authorList>
            <person name="Martini M."/>
            <person name="Botti S."/>
            <person name="Marcone C."/>
            <person name="Marzachi C."/>
            <person name="Casati P."/>
            <person name="Bianco P.A."/>
            <person name="Benedetti R."/>
            <person name="Bertaccini A."/>
        </authorList>
    </citation>
    <scope>NUCLEOTIDE SEQUENCE [GENOMIC DNA]</scope>
    <source>
        <strain>ULW</strain>
    </source>
</reference>
<accession>P0A4C1</accession>
<accession>Q8VLE1</accession>